<gene>
    <name evidence="1" type="primary">lipA</name>
    <name type="ordered locus">Adeh_1828</name>
</gene>
<dbReference type="EC" id="2.8.1.8" evidence="1"/>
<dbReference type="EMBL" id="CP000251">
    <property type="protein sequence ID" value="ABC81600.1"/>
    <property type="status" value="ALT_INIT"/>
    <property type="molecule type" value="Genomic_DNA"/>
</dbReference>
<dbReference type="RefSeq" id="WP_011420883.1">
    <property type="nucleotide sequence ID" value="NC_007760.1"/>
</dbReference>
<dbReference type="SMR" id="Q2IIW6"/>
<dbReference type="STRING" id="290397.Adeh_1828"/>
<dbReference type="KEGG" id="ade:Adeh_1828"/>
<dbReference type="eggNOG" id="COG0320">
    <property type="taxonomic scope" value="Bacteria"/>
</dbReference>
<dbReference type="HOGENOM" id="CLU_033144_2_0_7"/>
<dbReference type="OrthoDB" id="9787898at2"/>
<dbReference type="UniPathway" id="UPA00538">
    <property type="reaction ID" value="UER00593"/>
</dbReference>
<dbReference type="Proteomes" id="UP000001935">
    <property type="component" value="Chromosome"/>
</dbReference>
<dbReference type="GO" id="GO:0005737">
    <property type="term" value="C:cytoplasm"/>
    <property type="evidence" value="ECO:0007669"/>
    <property type="project" value="UniProtKB-SubCell"/>
</dbReference>
<dbReference type="GO" id="GO:0051539">
    <property type="term" value="F:4 iron, 4 sulfur cluster binding"/>
    <property type="evidence" value="ECO:0007669"/>
    <property type="project" value="UniProtKB-UniRule"/>
</dbReference>
<dbReference type="GO" id="GO:0016992">
    <property type="term" value="F:lipoate synthase activity"/>
    <property type="evidence" value="ECO:0007669"/>
    <property type="project" value="UniProtKB-UniRule"/>
</dbReference>
<dbReference type="GO" id="GO:0046872">
    <property type="term" value="F:metal ion binding"/>
    <property type="evidence" value="ECO:0007669"/>
    <property type="project" value="UniProtKB-KW"/>
</dbReference>
<dbReference type="Gene3D" id="3.20.20.70">
    <property type="entry name" value="Aldolase class I"/>
    <property type="match status" value="1"/>
</dbReference>
<dbReference type="HAMAP" id="MF_00206">
    <property type="entry name" value="Lipoyl_synth"/>
    <property type="match status" value="1"/>
</dbReference>
<dbReference type="InterPro" id="IPR013785">
    <property type="entry name" value="Aldolase_TIM"/>
</dbReference>
<dbReference type="InterPro" id="IPR006638">
    <property type="entry name" value="Elp3/MiaA/NifB-like_rSAM"/>
</dbReference>
<dbReference type="InterPro" id="IPR031691">
    <property type="entry name" value="LIAS_N"/>
</dbReference>
<dbReference type="InterPro" id="IPR003698">
    <property type="entry name" value="Lipoyl_synth"/>
</dbReference>
<dbReference type="InterPro" id="IPR007197">
    <property type="entry name" value="rSAM"/>
</dbReference>
<dbReference type="NCBIfam" id="TIGR00510">
    <property type="entry name" value="lipA"/>
    <property type="match status" value="1"/>
</dbReference>
<dbReference type="NCBIfam" id="NF004019">
    <property type="entry name" value="PRK05481.1"/>
    <property type="match status" value="1"/>
</dbReference>
<dbReference type="NCBIfam" id="NF009544">
    <property type="entry name" value="PRK12928.1"/>
    <property type="match status" value="1"/>
</dbReference>
<dbReference type="PANTHER" id="PTHR10949">
    <property type="entry name" value="LIPOYL SYNTHASE"/>
    <property type="match status" value="1"/>
</dbReference>
<dbReference type="PANTHER" id="PTHR10949:SF0">
    <property type="entry name" value="LIPOYL SYNTHASE, MITOCHONDRIAL"/>
    <property type="match status" value="1"/>
</dbReference>
<dbReference type="Pfam" id="PF16881">
    <property type="entry name" value="LIAS_N"/>
    <property type="match status" value="1"/>
</dbReference>
<dbReference type="Pfam" id="PF04055">
    <property type="entry name" value="Radical_SAM"/>
    <property type="match status" value="1"/>
</dbReference>
<dbReference type="PIRSF" id="PIRSF005963">
    <property type="entry name" value="Lipoyl_synth"/>
    <property type="match status" value="1"/>
</dbReference>
<dbReference type="SFLD" id="SFLDF00271">
    <property type="entry name" value="lipoyl_synthase"/>
    <property type="match status" value="1"/>
</dbReference>
<dbReference type="SFLD" id="SFLDG01058">
    <property type="entry name" value="lipoyl_synthase_like"/>
    <property type="match status" value="1"/>
</dbReference>
<dbReference type="SMART" id="SM00729">
    <property type="entry name" value="Elp3"/>
    <property type="match status" value="1"/>
</dbReference>
<dbReference type="SUPFAM" id="SSF102114">
    <property type="entry name" value="Radical SAM enzymes"/>
    <property type="match status" value="1"/>
</dbReference>
<dbReference type="PROSITE" id="PS51918">
    <property type="entry name" value="RADICAL_SAM"/>
    <property type="match status" value="1"/>
</dbReference>
<organism>
    <name type="scientific">Anaeromyxobacter dehalogenans (strain 2CP-C)</name>
    <dbReference type="NCBI Taxonomy" id="290397"/>
    <lineage>
        <taxon>Bacteria</taxon>
        <taxon>Pseudomonadati</taxon>
        <taxon>Myxococcota</taxon>
        <taxon>Myxococcia</taxon>
        <taxon>Myxococcales</taxon>
        <taxon>Cystobacterineae</taxon>
        <taxon>Anaeromyxobacteraceae</taxon>
        <taxon>Anaeromyxobacter</taxon>
    </lineage>
</organism>
<proteinExistence type="inferred from homology"/>
<sequence>MDAKKPSWLRVNVPGGERYQKVRETLKGLQLHTVCAEAHCPNVAECWGGGTATVMLMGDVCTRGCRFCNVKTAAHPPALDPDEPRHLAAAIAELGLDYIVVTSVDRDDLPDGGAAHFADAIRRLKEIPGLLVEVLTPDFRGDPAAVRTVGRAAPDVFANNLETVRRLTPAVRDAKATYDQTLGVLAQMKREFPQVVTKSSIMVGLGEQEAEVVEAMRDLRANGVEILTLGQYLRPSAWHLPVVEYVSPERFAAYRDQGLALGFRYVASGPLVRSSYRAAELFLRGEIESRTKPR</sequence>
<evidence type="ECO:0000255" key="1">
    <source>
        <dbReference type="HAMAP-Rule" id="MF_00206"/>
    </source>
</evidence>
<evidence type="ECO:0000255" key="2">
    <source>
        <dbReference type="PROSITE-ProRule" id="PRU01266"/>
    </source>
</evidence>
<evidence type="ECO:0000305" key="3"/>
<protein>
    <recommendedName>
        <fullName evidence="1">Lipoyl synthase</fullName>
        <ecNumber evidence="1">2.8.1.8</ecNumber>
    </recommendedName>
    <alternativeName>
        <fullName evidence="1">Lip-syn</fullName>
        <shortName evidence="1">LS</shortName>
    </alternativeName>
    <alternativeName>
        <fullName evidence="1">Lipoate synthase</fullName>
    </alternativeName>
    <alternativeName>
        <fullName evidence="1">Lipoic acid synthase</fullName>
    </alternativeName>
    <alternativeName>
        <fullName evidence="1">Sulfur insertion protein LipA</fullName>
    </alternativeName>
</protein>
<comment type="function">
    <text evidence="1">Catalyzes the radical-mediated insertion of two sulfur atoms into the C-6 and C-8 positions of the octanoyl moiety bound to the lipoyl domains of lipoate-dependent enzymes, thereby converting the octanoylated domains into lipoylated derivatives.</text>
</comment>
<comment type="catalytic activity">
    <reaction evidence="1">
        <text>[[Fe-S] cluster scaffold protein carrying a second [4Fe-4S](2+) cluster] + N(6)-octanoyl-L-lysyl-[protein] + 2 oxidized [2Fe-2S]-[ferredoxin] + 2 S-adenosyl-L-methionine + 4 H(+) = [[Fe-S] cluster scaffold protein] + N(6)-[(R)-dihydrolipoyl]-L-lysyl-[protein] + 4 Fe(3+) + 2 hydrogen sulfide + 2 5'-deoxyadenosine + 2 L-methionine + 2 reduced [2Fe-2S]-[ferredoxin]</text>
        <dbReference type="Rhea" id="RHEA:16585"/>
        <dbReference type="Rhea" id="RHEA-COMP:9928"/>
        <dbReference type="Rhea" id="RHEA-COMP:10000"/>
        <dbReference type="Rhea" id="RHEA-COMP:10001"/>
        <dbReference type="Rhea" id="RHEA-COMP:10475"/>
        <dbReference type="Rhea" id="RHEA-COMP:14568"/>
        <dbReference type="Rhea" id="RHEA-COMP:14569"/>
        <dbReference type="ChEBI" id="CHEBI:15378"/>
        <dbReference type="ChEBI" id="CHEBI:17319"/>
        <dbReference type="ChEBI" id="CHEBI:29034"/>
        <dbReference type="ChEBI" id="CHEBI:29919"/>
        <dbReference type="ChEBI" id="CHEBI:33722"/>
        <dbReference type="ChEBI" id="CHEBI:33737"/>
        <dbReference type="ChEBI" id="CHEBI:33738"/>
        <dbReference type="ChEBI" id="CHEBI:57844"/>
        <dbReference type="ChEBI" id="CHEBI:59789"/>
        <dbReference type="ChEBI" id="CHEBI:78809"/>
        <dbReference type="ChEBI" id="CHEBI:83100"/>
        <dbReference type="EC" id="2.8.1.8"/>
    </reaction>
</comment>
<comment type="cofactor">
    <cofactor evidence="1">
        <name>[4Fe-4S] cluster</name>
        <dbReference type="ChEBI" id="CHEBI:49883"/>
    </cofactor>
    <text evidence="1">Binds 2 [4Fe-4S] clusters per subunit. One cluster is coordinated with 3 cysteines and an exchangeable S-adenosyl-L-methionine.</text>
</comment>
<comment type="pathway">
    <text evidence="1">Protein modification; protein lipoylation via endogenous pathway; protein N(6)-(lipoyl)lysine from octanoyl-[acyl-carrier-protein]: step 2/2.</text>
</comment>
<comment type="subcellular location">
    <subcellularLocation>
        <location evidence="1">Cytoplasm</location>
    </subcellularLocation>
</comment>
<comment type="similarity">
    <text evidence="1">Belongs to the radical SAM superfamily. Lipoyl synthase family.</text>
</comment>
<comment type="sequence caution" evidence="3">
    <conflict type="erroneous initiation">
        <sequence resource="EMBL-CDS" id="ABC81600"/>
    </conflict>
</comment>
<reference key="1">
    <citation type="submission" date="2006-01" db="EMBL/GenBank/DDBJ databases">
        <title>Complete sequence of Anaeromyxobacter dehalogenans 2CP-C.</title>
        <authorList>
            <person name="Copeland A."/>
            <person name="Lucas S."/>
            <person name="Lapidus A."/>
            <person name="Barry K."/>
            <person name="Detter J.C."/>
            <person name="Glavina T."/>
            <person name="Hammon N."/>
            <person name="Israni S."/>
            <person name="Pitluck S."/>
            <person name="Brettin T."/>
            <person name="Bruce D."/>
            <person name="Han C."/>
            <person name="Tapia R."/>
            <person name="Gilna P."/>
            <person name="Kiss H."/>
            <person name="Schmutz J."/>
            <person name="Larimer F."/>
            <person name="Land M."/>
            <person name="Kyrpides N."/>
            <person name="Anderson I."/>
            <person name="Sanford R.A."/>
            <person name="Ritalahti K.M."/>
            <person name="Thomas H.S."/>
            <person name="Kirby J.R."/>
            <person name="Zhulin I.B."/>
            <person name="Loeffler F.E."/>
            <person name="Richardson P."/>
        </authorList>
    </citation>
    <scope>NUCLEOTIDE SEQUENCE [LARGE SCALE GENOMIC DNA]</scope>
    <source>
        <strain>2CP-C</strain>
    </source>
</reference>
<keyword id="KW-0004">4Fe-4S</keyword>
<keyword id="KW-0963">Cytoplasm</keyword>
<keyword id="KW-0408">Iron</keyword>
<keyword id="KW-0411">Iron-sulfur</keyword>
<keyword id="KW-0479">Metal-binding</keyword>
<keyword id="KW-1185">Reference proteome</keyword>
<keyword id="KW-0949">S-adenosyl-L-methionine</keyword>
<keyword id="KW-0808">Transferase</keyword>
<name>LIPA_ANADE</name>
<feature type="chain" id="PRO_0000325226" description="Lipoyl synthase">
    <location>
        <begin position="1"/>
        <end position="294"/>
    </location>
</feature>
<feature type="domain" description="Radical SAM core" evidence="2">
    <location>
        <begin position="46"/>
        <end position="264"/>
    </location>
</feature>
<feature type="binding site" evidence="1">
    <location>
        <position position="35"/>
    </location>
    <ligand>
        <name>[4Fe-4S] cluster</name>
        <dbReference type="ChEBI" id="CHEBI:49883"/>
        <label>1</label>
    </ligand>
</feature>
<feature type="binding site" evidence="1">
    <location>
        <position position="40"/>
    </location>
    <ligand>
        <name>[4Fe-4S] cluster</name>
        <dbReference type="ChEBI" id="CHEBI:49883"/>
        <label>1</label>
    </ligand>
</feature>
<feature type="binding site" evidence="1">
    <location>
        <position position="46"/>
    </location>
    <ligand>
        <name>[4Fe-4S] cluster</name>
        <dbReference type="ChEBI" id="CHEBI:49883"/>
        <label>1</label>
    </ligand>
</feature>
<feature type="binding site" evidence="1">
    <location>
        <position position="61"/>
    </location>
    <ligand>
        <name>[4Fe-4S] cluster</name>
        <dbReference type="ChEBI" id="CHEBI:49883"/>
        <label>2</label>
        <note>4Fe-4S-S-AdoMet</note>
    </ligand>
</feature>
<feature type="binding site" evidence="1">
    <location>
        <position position="65"/>
    </location>
    <ligand>
        <name>[4Fe-4S] cluster</name>
        <dbReference type="ChEBI" id="CHEBI:49883"/>
        <label>2</label>
        <note>4Fe-4S-S-AdoMet</note>
    </ligand>
</feature>
<feature type="binding site" evidence="1">
    <location>
        <position position="68"/>
    </location>
    <ligand>
        <name>[4Fe-4S] cluster</name>
        <dbReference type="ChEBI" id="CHEBI:49883"/>
        <label>2</label>
        <note>4Fe-4S-S-AdoMet</note>
    </ligand>
</feature>
<feature type="binding site" evidence="1">
    <location>
        <position position="275"/>
    </location>
    <ligand>
        <name>[4Fe-4S] cluster</name>
        <dbReference type="ChEBI" id="CHEBI:49883"/>
        <label>1</label>
    </ligand>
</feature>
<accession>Q2IIW6</accession>